<keyword id="KW-0687">Ribonucleoprotein</keyword>
<keyword id="KW-0689">Ribosomal protein</keyword>
<keyword id="KW-0694">RNA-binding</keyword>
<keyword id="KW-0699">rRNA-binding</keyword>
<reference key="1">
    <citation type="submission" date="2008-06" db="EMBL/GenBank/DDBJ databases">
        <title>Genome and proteome analysis of A. pleuropneumoniae serotype 7.</title>
        <authorList>
            <person name="Linke B."/>
            <person name="Buettner F."/>
            <person name="Martinez-Arias R."/>
            <person name="Goesmann A."/>
            <person name="Baltes N."/>
            <person name="Tegetmeyer H."/>
            <person name="Singh M."/>
            <person name="Gerlach G.F."/>
        </authorList>
    </citation>
    <scope>NUCLEOTIDE SEQUENCE [LARGE SCALE GENOMIC DNA]</scope>
    <source>
        <strain>AP76</strain>
    </source>
</reference>
<gene>
    <name evidence="1" type="primary">rplF</name>
    <name type="ordered locus">APP7_1860</name>
</gene>
<sequence length="177" mass="18873">MSRVAKAPVNIPAGVEVKLNGQLLTVKGKNGELSREIHNAVEVNQDANALTFVPRTGVANADAQAGTARALVNAMVIGVTEGFTKKLQLVGVGYRAQMKGNVVALSLGYSHPIEHTLPAGVTGECPSQTEIVLKSADKQLIGQVAADIRAYRRPEPYKGKGVRYSDEVVRTKEAKKK</sequence>
<organism>
    <name type="scientific">Actinobacillus pleuropneumoniae serotype 7 (strain AP76)</name>
    <dbReference type="NCBI Taxonomy" id="537457"/>
    <lineage>
        <taxon>Bacteria</taxon>
        <taxon>Pseudomonadati</taxon>
        <taxon>Pseudomonadota</taxon>
        <taxon>Gammaproteobacteria</taxon>
        <taxon>Pasteurellales</taxon>
        <taxon>Pasteurellaceae</taxon>
        <taxon>Actinobacillus</taxon>
    </lineage>
</organism>
<name>RL6_ACTP7</name>
<feature type="chain" id="PRO_1000143936" description="Large ribosomal subunit protein uL6">
    <location>
        <begin position="1"/>
        <end position="177"/>
    </location>
</feature>
<dbReference type="EMBL" id="CP001091">
    <property type="protein sequence ID" value="ACE62512.1"/>
    <property type="molecule type" value="Genomic_DNA"/>
</dbReference>
<dbReference type="RefSeq" id="WP_005599308.1">
    <property type="nucleotide sequence ID" value="NC_010939.1"/>
</dbReference>
<dbReference type="SMR" id="B3GZ26"/>
<dbReference type="GeneID" id="48600067"/>
<dbReference type="KEGG" id="apa:APP7_1860"/>
<dbReference type="HOGENOM" id="CLU_065464_1_2_6"/>
<dbReference type="Proteomes" id="UP000001226">
    <property type="component" value="Chromosome"/>
</dbReference>
<dbReference type="GO" id="GO:0022625">
    <property type="term" value="C:cytosolic large ribosomal subunit"/>
    <property type="evidence" value="ECO:0007669"/>
    <property type="project" value="TreeGrafter"/>
</dbReference>
<dbReference type="GO" id="GO:0019843">
    <property type="term" value="F:rRNA binding"/>
    <property type="evidence" value="ECO:0007669"/>
    <property type="project" value="UniProtKB-UniRule"/>
</dbReference>
<dbReference type="GO" id="GO:0003735">
    <property type="term" value="F:structural constituent of ribosome"/>
    <property type="evidence" value="ECO:0007669"/>
    <property type="project" value="InterPro"/>
</dbReference>
<dbReference type="GO" id="GO:0002181">
    <property type="term" value="P:cytoplasmic translation"/>
    <property type="evidence" value="ECO:0007669"/>
    <property type="project" value="TreeGrafter"/>
</dbReference>
<dbReference type="FunFam" id="3.90.930.12:FF:000001">
    <property type="entry name" value="50S ribosomal protein L6"/>
    <property type="match status" value="1"/>
</dbReference>
<dbReference type="FunFam" id="3.90.930.12:FF:000002">
    <property type="entry name" value="50S ribosomal protein L6"/>
    <property type="match status" value="1"/>
</dbReference>
<dbReference type="Gene3D" id="3.90.930.12">
    <property type="entry name" value="Ribosomal protein L6, alpha-beta domain"/>
    <property type="match status" value="2"/>
</dbReference>
<dbReference type="HAMAP" id="MF_01365_B">
    <property type="entry name" value="Ribosomal_uL6_B"/>
    <property type="match status" value="1"/>
</dbReference>
<dbReference type="InterPro" id="IPR000702">
    <property type="entry name" value="Ribosomal_uL6-like"/>
</dbReference>
<dbReference type="InterPro" id="IPR036789">
    <property type="entry name" value="Ribosomal_uL6-like_a/b-dom_sf"/>
</dbReference>
<dbReference type="InterPro" id="IPR020040">
    <property type="entry name" value="Ribosomal_uL6_a/b-dom"/>
</dbReference>
<dbReference type="InterPro" id="IPR019906">
    <property type="entry name" value="Ribosomal_uL6_bac-type"/>
</dbReference>
<dbReference type="InterPro" id="IPR002358">
    <property type="entry name" value="Ribosomal_uL6_CS"/>
</dbReference>
<dbReference type="NCBIfam" id="TIGR03654">
    <property type="entry name" value="L6_bact"/>
    <property type="match status" value="1"/>
</dbReference>
<dbReference type="PANTHER" id="PTHR11655">
    <property type="entry name" value="60S/50S RIBOSOMAL PROTEIN L6/L9"/>
    <property type="match status" value="1"/>
</dbReference>
<dbReference type="PANTHER" id="PTHR11655:SF14">
    <property type="entry name" value="LARGE RIBOSOMAL SUBUNIT PROTEIN UL6M"/>
    <property type="match status" value="1"/>
</dbReference>
<dbReference type="Pfam" id="PF00347">
    <property type="entry name" value="Ribosomal_L6"/>
    <property type="match status" value="2"/>
</dbReference>
<dbReference type="PIRSF" id="PIRSF002162">
    <property type="entry name" value="Ribosomal_L6"/>
    <property type="match status" value="1"/>
</dbReference>
<dbReference type="PRINTS" id="PR00059">
    <property type="entry name" value="RIBOSOMALL6"/>
</dbReference>
<dbReference type="SUPFAM" id="SSF56053">
    <property type="entry name" value="Ribosomal protein L6"/>
    <property type="match status" value="2"/>
</dbReference>
<dbReference type="PROSITE" id="PS00525">
    <property type="entry name" value="RIBOSOMAL_L6_1"/>
    <property type="match status" value="1"/>
</dbReference>
<proteinExistence type="inferred from homology"/>
<evidence type="ECO:0000255" key="1">
    <source>
        <dbReference type="HAMAP-Rule" id="MF_01365"/>
    </source>
</evidence>
<evidence type="ECO:0000305" key="2"/>
<protein>
    <recommendedName>
        <fullName evidence="1">Large ribosomal subunit protein uL6</fullName>
    </recommendedName>
    <alternativeName>
        <fullName evidence="2">50S ribosomal protein L6</fullName>
    </alternativeName>
</protein>
<comment type="function">
    <text evidence="1">This protein binds to the 23S rRNA, and is important in its secondary structure. It is located near the subunit interface in the base of the L7/L12 stalk, and near the tRNA binding site of the peptidyltransferase center.</text>
</comment>
<comment type="subunit">
    <text evidence="1">Part of the 50S ribosomal subunit.</text>
</comment>
<comment type="similarity">
    <text evidence="1">Belongs to the universal ribosomal protein uL6 family.</text>
</comment>
<accession>B3GZ26</accession>